<keyword id="KW-0472">Membrane</keyword>
<keyword id="KW-0496">Mitochondrion</keyword>
<keyword id="KW-0999">Mitochondrion inner membrane</keyword>
<keyword id="KW-1185">Reference proteome</keyword>
<keyword id="KW-0809">Transit peptide</keyword>
<keyword id="KW-0810">Translation regulation</keyword>
<sequence>MRRAGFQASSLLGRICSSGLNCKKLTVAFSSNEHMAMSSWAGDLGRRIGTQLYRRENVAELRRLQAELQQQWTAAGDGRARAELEACARDEEERAFFRLLMPASGPEVTQRLEEAVKEVLGGRSSRAEKRERLYCAIALVARENAGRGIEVPEAAHRWFAADLGRNEYFGHMQFLIEHGVQLNAPAAFQLVRTMLRSGSELEVQLVSFKLFLYDTESRRVFEEKFDRVYDFMRMHYVITQMVVRRDFRFMRDYLEVLARRLEQHELCDARMSAAVQRDHIARYTELLMLYARKSGDEKMLAELFASLVDSLPRGMGGATLRQPLHEVMTYLISENQPQQVLKLVAGMRKAEPNRRPGKSSVPGTLALVVSALRQFNNPNLVVSFIVQAYRKTQTRVLLGQLGLWSLAFYGRAVALSPEAAKSPQELAQISPVDLPKELILKSVPDSCIMCELYQAILSEKRSQVPAEEYREILIQLFALYQDFMGKLVHKYDYYHLYDTSVLRLLLYKIKNEVGDGELAFKLLMDFYGQPKMRPKCTAEGNPFGVVLYQNNAITQTQLNQALALMGGLRIPMDFKTTSSMVLWYASAGDIDLAHTWYTKLVRGRFQMKNRRVLKLALAHGWTIPAYADQQLVSELSRADNSSDGPEHTQEAVETAVLESEEASACTSIIIEKADELLHKIQQTRPLDPPSDTRSAAP</sequence>
<gene>
    <name type="primary">ATP22</name>
    <name type="ordered locus">ACL103W</name>
</gene>
<accession>Q75CM2</accession>
<comment type="function">
    <text evidence="1">Translation factor specific for subunit 6 of the mitochondrial ATPase. Required for assembly of the CF(0) component of the ATPase (By similarity).</text>
</comment>
<comment type="subcellular location">
    <subcellularLocation>
        <location evidence="1">Mitochondrion inner membrane</location>
        <topology evidence="1">Peripheral membrane protein</topology>
        <orientation evidence="1">Matrix side</orientation>
    </subcellularLocation>
</comment>
<comment type="similarity">
    <text evidence="3">Belongs to the ATP22 family.</text>
</comment>
<reference key="1">
    <citation type="journal article" date="2004" name="Science">
        <title>The Ashbya gossypii genome as a tool for mapping the ancient Saccharomyces cerevisiae genome.</title>
        <authorList>
            <person name="Dietrich F.S."/>
            <person name="Voegeli S."/>
            <person name="Brachat S."/>
            <person name="Lerch A."/>
            <person name="Gates K."/>
            <person name="Steiner S."/>
            <person name="Mohr C."/>
            <person name="Poehlmann R."/>
            <person name="Luedi P."/>
            <person name="Choi S."/>
            <person name="Wing R.A."/>
            <person name="Flavier A."/>
            <person name="Gaffney T.D."/>
            <person name="Philippsen P."/>
        </authorList>
    </citation>
    <scope>NUCLEOTIDE SEQUENCE [LARGE SCALE GENOMIC DNA]</scope>
    <source>
        <strain>ATCC 10895 / CBS 109.51 / FGSC 9923 / NRRL Y-1056</strain>
    </source>
</reference>
<reference key="2">
    <citation type="journal article" date="2013" name="G3 (Bethesda)">
        <title>Genomes of Ashbya fungi isolated from insects reveal four mating-type loci, numerous translocations, lack of transposons, and distinct gene duplications.</title>
        <authorList>
            <person name="Dietrich F.S."/>
            <person name="Voegeli S."/>
            <person name="Kuo S."/>
            <person name="Philippsen P."/>
        </authorList>
    </citation>
    <scope>GENOME REANNOTATION</scope>
    <source>
        <strain>ATCC 10895 / CBS 109.51 / FGSC 9923 / NRRL Y-1056</strain>
    </source>
</reference>
<evidence type="ECO:0000250" key="1"/>
<evidence type="ECO:0000255" key="2"/>
<evidence type="ECO:0000305" key="3"/>
<organism>
    <name type="scientific">Eremothecium gossypii (strain ATCC 10895 / CBS 109.51 / FGSC 9923 / NRRL Y-1056)</name>
    <name type="common">Yeast</name>
    <name type="synonym">Ashbya gossypii</name>
    <dbReference type="NCBI Taxonomy" id="284811"/>
    <lineage>
        <taxon>Eukaryota</taxon>
        <taxon>Fungi</taxon>
        <taxon>Dikarya</taxon>
        <taxon>Ascomycota</taxon>
        <taxon>Saccharomycotina</taxon>
        <taxon>Saccharomycetes</taxon>
        <taxon>Saccharomycetales</taxon>
        <taxon>Saccharomycetaceae</taxon>
        <taxon>Eremothecium</taxon>
    </lineage>
</organism>
<name>ATP22_EREGS</name>
<protein>
    <recommendedName>
        <fullName>Mitochondrial translation factor ATP22</fullName>
    </recommendedName>
</protein>
<feature type="transit peptide" description="Mitochondrion" evidence="2">
    <location>
        <begin position="1"/>
        <end position="65"/>
    </location>
</feature>
<feature type="chain" id="PRO_0000330045" description="Mitochondrial translation factor ATP22">
    <location>
        <begin position="66"/>
        <end position="697"/>
    </location>
</feature>
<proteinExistence type="inferred from homology"/>
<dbReference type="EMBL" id="AE016816">
    <property type="protein sequence ID" value="AAS51125.1"/>
    <property type="molecule type" value="Genomic_DNA"/>
</dbReference>
<dbReference type="RefSeq" id="NP_983301.1">
    <property type="nucleotide sequence ID" value="NM_208654.1"/>
</dbReference>
<dbReference type="FunCoup" id="Q75CM2">
    <property type="interactions" value="33"/>
</dbReference>
<dbReference type="EnsemblFungi" id="AAS51125">
    <property type="protein sequence ID" value="AAS51125"/>
    <property type="gene ID" value="AGOS_ACL103W"/>
</dbReference>
<dbReference type="GeneID" id="4619421"/>
<dbReference type="KEGG" id="ago:AGOS_ACL103W"/>
<dbReference type="eggNOG" id="ENOG502QUX9">
    <property type="taxonomic scope" value="Eukaryota"/>
</dbReference>
<dbReference type="HOGENOM" id="CLU_024415_0_0_1"/>
<dbReference type="InParanoid" id="Q75CM2"/>
<dbReference type="OMA" id="HINNCSE"/>
<dbReference type="OrthoDB" id="4064138at2759"/>
<dbReference type="Proteomes" id="UP000000591">
    <property type="component" value="Chromosome III"/>
</dbReference>
<dbReference type="GO" id="GO:0005743">
    <property type="term" value="C:mitochondrial inner membrane"/>
    <property type="evidence" value="ECO:0007669"/>
    <property type="project" value="UniProtKB-SubCell"/>
</dbReference>
<dbReference type="GO" id="GO:0045182">
    <property type="term" value="F:translation regulator activity"/>
    <property type="evidence" value="ECO:0007669"/>
    <property type="project" value="InterPro"/>
</dbReference>
<dbReference type="InterPro" id="IPR017207">
    <property type="entry name" value="Atp22"/>
</dbReference>
<dbReference type="PIRSF" id="PIRSF037437">
    <property type="entry name" value="Atp22"/>
    <property type="match status" value="1"/>
</dbReference>